<reference key="1">
    <citation type="submission" date="2018-03" db="EMBL/GenBank/DDBJ databases">
        <title>Bacillus urumqiensis sp. nov., a moderately haloalkaliphilic bacterium isolated from a salt lake.</title>
        <authorList>
            <person name="Zhao B."/>
            <person name="Liao Z."/>
        </authorList>
    </citation>
    <scope>NUCLEOTIDE SEQUENCE [LARGE SCALE GENOMIC DNA]</scope>
    <source>
        <strain>DSM 29145 / JCM 30195 / BZ-SZ-XJ18</strain>
    </source>
</reference>
<reference key="2">
    <citation type="journal article" date="2021" name="ACS Catal.">
        <title>Mechanistically diverse pathways for sulfoquinovose degradation in bacteria.</title>
        <authorList>
            <person name="Liu J."/>
            <person name="Wei Y."/>
            <person name="Ma K."/>
            <person name="An J."/>
            <person name="Liu X."/>
            <person name="Liu Y."/>
            <person name="Ang E.L."/>
            <person name="Zhao H."/>
            <person name="Zhang Y."/>
        </authorList>
    </citation>
    <scope>FUNCTION</scope>
    <scope>CATALYTIC ACTIVITY</scope>
</reference>
<proteinExistence type="evidence at protein level"/>
<protein>
    <recommendedName>
        <fullName evidence="4">Sulfofructose kinase</fullName>
        <shortName evidence="4">SF kinase</shortName>
        <ecNumber evidence="3">2.7.1.184</ecNumber>
    </recommendedName>
</protein>
<feature type="chain" id="PRO_0000458935" description="Sulfofructose kinase">
    <location>
        <begin position="1"/>
        <end position="381"/>
    </location>
</feature>
<feature type="active site" description="Proton acceptor" evidence="1">
    <location>
        <position position="131"/>
    </location>
</feature>
<feature type="binding site" evidence="1">
    <location>
        <position position="10"/>
    </location>
    <ligand>
        <name>ATP</name>
        <dbReference type="ChEBI" id="CHEBI:30616"/>
    </ligand>
</feature>
<feature type="binding site" evidence="1">
    <location>
        <begin position="72"/>
        <end position="73"/>
    </location>
    <ligand>
        <name>ATP</name>
        <dbReference type="ChEBI" id="CHEBI:30616"/>
    </ligand>
</feature>
<feature type="binding site" evidence="1">
    <location>
        <begin position="100"/>
        <end position="103"/>
    </location>
    <ligand>
        <name>ATP</name>
        <dbReference type="ChEBI" id="CHEBI:30616"/>
    </ligand>
</feature>
<feature type="binding site" evidence="1">
    <location>
        <position position="101"/>
    </location>
    <ligand>
        <name>Mg(2+)</name>
        <dbReference type="ChEBI" id="CHEBI:18420"/>
        <note>catalytic</note>
    </ligand>
</feature>
<keyword id="KW-0067">ATP-binding</keyword>
<keyword id="KW-0119">Carbohydrate metabolism</keyword>
<keyword id="KW-0418">Kinase</keyword>
<keyword id="KW-0460">Magnesium</keyword>
<keyword id="KW-0479">Metal-binding</keyword>
<keyword id="KW-0547">Nucleotide-binding</keyword>
<keyword id="KW-1185">Reference proteome</keyword>
<keyword id="KW-0808">Transferase</keyword>
<name>SQIK_ALKUR</name>
<dbReference type="EC" id="2.7.1.184" evidence="3"/>
<dbReference type="EMBL" id="PVNS01000006">
    <property type="protein sequence ID" value="PRO65852.1"/>
    <property type="molecule type" value="Genomic_DNA"/>
</dbReference>
<dbReference type="RefSeq" id="WP_105958948.1">
    <property type="nucleotide sequence ID" value="NZ_PVNS01000006.1"/>
</dbReference>
<dbReference type="SMR" id="A0A2P6MHT4"/>
<dbReference type="OrthoDB" id="9802503at2"/>
<dbReference type="BioCyc" id="MetaCyc:MONOMER-21942"/>
<dbReference type="Proteomes" id="UP000243650">
    <property type="component" value="Unassembled WGS sequence"/>
</dbReference>
<dbReference type="GO" id="GO:0003872">
    <property type="term" value="F:6-phosphofructokinase activity"/>
    <property type="evidence" value="ECO:0007669"/>
    <property type="project" value="InterPro"/>
</dbReference>
<dbReference type="GO" id="GO:0005524">
    <property type="term" value="F:ATP binding"/>
    <property type="evidence" value="ECO:0007669"/>
    <property type="project" value="UniProtKB-KW"/>
</dbReference>
<dbReference type="GO" id="GO:0046872">
    <property type="term" value="F:metal ion binding"/>
    <property type="evidence" value="ECO:0007669"/>
    <property type="project" value="UniProtKB-KW"/>
</dbReference>
<dbReference type="GO" id="GO:0006002">
    <property type="term" value="P:fructose 6-phosphate metabolic process"/>
    <property type="evidence" value="ECO:0007669"/>
    <property type="project" value="InterPro"/>
</dbReference>
<dbReference type="Gene3D" id="3.40.50.450">
    <property type="match status" value="1"/>
</dbReference>
<dbReference type="Gene3D" id="3.40.50.460">
    <property type="entry name" value="Phosphofructokinase domain"/>
    <property type="match status" value="1"/>
</dbReference>
<dbReference type="InterPro" id="IPR022953">
    <property type="entry name" value="ATP_PFK"/>
</dbReference>
<dbReference type="InterPro" id="IPR050929">
    <property type="entry name" value="PFKA"/>
</dbReference>
<dbReference type="InterPro" id="IPR000023">
    <property type="entry name" value="Phosphofructokinase_dom"/>
</dbReference>
<dbReference type="InterPro" id="IPR035966">
    <property type="entry name" value="PKF_sf"/>
</dbReference>
<dbReference type="NCBIfam" id="NF010675">
    <property type="entry name" value="PRK14072.1"/>
    <property type="match status" value="1"/>
</dbReference>
<dbReference type="PANTHER" id="PTHR45770">
    <property type="entry name" value="ATP-DEPENDENT 6-PHOSPHOFRUCTOKINASE 1"/>
    <property type="match status" value="1"/>
</dbReference>
<dbReference type="Pfam" id="PF00365">
    <property type="entry name" value="PFK"/>
    <property type="match status" value="1"/>
</dbReference>
<dbReference type="PIRSF" id="PIRSF036483">
    <property type="entry name" value="PFK_XF0274"/>
    <property type="match status" value="1"/>
</dbReference>
<dbReference type="PRINTS" id="PR00476">
    <property type="entry name" value="PHFRCTKINASE"/>
</dbReference>
<dbReference type="SUPFAM" id="SSF53784">
    <property type="entry name" value="Phosphofructokinase"/>
    <property type="match status" value="1"/>
</dbReference>
<evidence type="ECO:0000250" key="1">
    <source>
        <dbReference type="UniProtKB" id="P0A796"/>
    </source>
</evidence>
<evidence type="ECO:0000250" key="2">
    <source>
        <dbReference type="UniProtKB" id="Q2RNU4"/>
    </source>
</evidence>
<evidence type="ECO:0000269" key="3">
    <source ref="2"/>
</evidence>
<evidence type="ECO:0000303" key="4">
    <source ref="2"/>
</evidence>
<evidence type="ECO:0000305" key="5"/>
<evidence type="ECO:0000312" key="6">
    <source>
        <dbReference type="EMBL" id="PRO65852.1"/>
    </source>
</evidence>
<gene>
    <name evidence="4" type="primary">sqiK</name>
    <name evidence="6" type="ORF">C6I21_08115</name>
</gene>
<comment type="function">
    <text evidence="3">Part of the sulfo-EMP2 pathway, a D-sulfoquinovose degradation pathway that produces sulfolactate (SL) (Ref.2). Phosphorylates 6-deoxy-6-sulfo-D-fructose (SF) to 6-deoxy-6-sulfo-D-fructose 1-phosphate (SFP) (Ref.2).</text>
</comment>
<comment type="catalytic activity">
    <reaction evidence="3">
        <text>6-deoxy-6-sulfo-D-fructose + ATP = 6-deoxy-6-sulfo-D-fructose 1-phosphate + ADP + H(+)</text>
        <dbReference type="Rhea" id="RHEA:40443"/>
        <dbReference type="ChEBI" id="CHEBI:15378"/>
        <dbReference type="ChEBI" id="CHEBI:30616"/>
        <dbReference type="ChEBI" id="CHEBI:77133"/>
        <dbReference type="ChEBI" id="CHEBI:77134"/>
        <dbReference type="ChEBI" id="CHEBI:456216"/>
        <dbReference type="EC" id="2.7.1.184"/>
    </reaction>
    <physiologicalReaction direction="left-to-right" evidence="3">
        <dbReference type="Rhea" id="RHEA:40444"/>
    </physiologicalReaction>
</comment>
<comment type="cofactor">
    <cofactor evidence="2">
        <name>Mg(2+)</name>
        <dbReference type="ChEBI" id="CHEBI:18420"/>
    </cofactor>
</comment>
<comment type="similarity">
    <text evidence="5">Belongs to the phosphofructokinase type A (PFKA) family.</text>
</comment>
<organism>
    <name type="scientific">Alkalicoccus urumqiensis</name>
    <name type="common">Bacillus urumqiensis</name>
    <dbReference type="NCBI Taxonomy" id="1548213"/>
    <lineage>
        <taxon>Bacteria</taxon>
        <taxon>Bacillati</taxon>
        <taxon>Bacillota</taxon>
        <taxon>Bacilli</taxon>
        <taxon>Bacillales</taxon>
        <taxon>Bacillaceae</taxon>
        <taxon>Alkalicoccus</taxon>
    </lineage>
</organism>
<sequence length="381" mass="41584">MRVAIGQAGGPTSVINESLASFVSTFSDDDIYLVLNGYEGLATNQMKAMGEMQRETIERSRGEPGAVLGSGRYDFSPALQKQALAYLMERRIEALVFIGGNGTMSALHAVQHLAEEAGYPLKVIGIPKTVDNDIAGIDHAPGFGSAAKYVAQSARYSKMDLQAMRNFEQVRILETMGRNVGWLAQASGYGMTEEAGPDAIYVPEREYSLETILGDVRRAWKEKGYCLLVISEGVTINNQQTALSNSRGRTILGGVSKVIEEAVREKLELVSRAEQLGMNQRCYYPAVSKVDQQEAAAVGTYAAKLVQNGESGFMVGVHRHDTMNYKAELTRVPLQIVSDGGERLLPDTYIEERKAYNEWLEGIIDLPPVSTQTQAGSSSIL</sequence>
<accession>A0A2P6MHT4</accession>